<protein>
    <recommendedName>
        <fullName evidence="2">Sensor histidine kinase RcsC</fullName>
        <ecNumber evidence="2">2.7.13.3</ecNumber>
    </recommendedName>
</protein>
<proteinExistence type="inferred from homology"/>
<comment type="function">
    <text evidence="2">Component of the Rcs signaling system, which controls transcription of numerous genes. RcsC functions as a membrane-associated protein kinase that phosphorylates RcsD in response to environmental signals. The phosphoryl group is then transferred to the response regulator RcsB.</text>
</comment>
<comment type="catalytic activity">
    <reaction evidence="2">
        <text>ATP + protein L-histidine = ADP + protein N-phospho-L-histidine.</text>
        <dbReference type="EC" id="2.7.13.3"/>
    </reaction>
</comment>
<comment type="subunit">
    <text evidence="2">Interacts with RcsD.</text>
</comment>
<comment type="subcellular location">
    <subcellularLocation>
        <location evidence="2">Cell inner membrane</location>
        <topology evidence="2">Multi-pass membrane protein</topology>
    </subcellularLocation>
</comment>
<comment type="PTM">
    <text evidence="2">Autophosphorylated. Activation probably requires a transfer of a phosphate group from a His in the transmitter domain to an Asp in the receiver domain.</text>
</comment>
<comment type="similarity">
    <text evidence="2">Belongs to the RcsC family.</text>
</comment>
<dbReference type="EC" id="2.7.13.3" evidence="2"/>
<dbReference type="EMBL" id="AE006468">
    <property type="protein sequence ID" value="AAL21172.1"/>
    <property type="molecule type" value="Genomic_DNA"/>
</dbReference>
<dbReference type="RefSeq" id="NP_461213.1">
    <property type="nucleotide sequence ID" value="NC_003197.2"/>
</dbReference>
<dbReference type="RefSeq" id="WP_000876078.1">
    <property type="nucleotide sequence ID" value="NC_003197.2"/>
</dbReference>
<dbReference type="SMR" id="P58662"/>
<dbReference type="STRING" id="99287.STM2271"/>
<dbReference type="PaxDb" id="99287-STM2271"/>
<dbReference type="GeneID" id="1253793"/>
<dbReference type="KEGG" id="stm:STM2271"/>
<dbReference type="PATRIC" id="fig|99287.12.peg.2404"/>
<dbReference type="HOGENOM" id="CLU_000445_15_6_6"/>
<dbReference type="OMA" id="GLRDMPI"/>
<dbReference type="PhylomeDB" id="P58662"/>
<dbReference type="BioCyc" id="SENT99287:STM2271-MONOMER"/>
<dbReference type="BRENDA" id="2.7.13.3">
    <property type="organism ID" value="5542"/>
</dbReference>
<dbReference type="PHI-base" id="PHI:3011"/>
<dbReference type="Proteomes" id="UP000001014">
    <property type="component" value="Chromosome"/>
</dbReference>
<dbReference type="GO" id="GO:0005886">
    <property type="term" value="C:plasma membrane"/>
    <property type="evidence" value="ECO:0007669"/>
    <property type="project" value="UniProtKB-SubCell"/>
</dbReference>
<dbReference type="GO" id="GO:0005524">
    <property type="term" value="F:ATP binding"/>
    <property type="evidence" value="ECO:0007669"/>
    <property type="project" value="UniProtKB-UniRule"/>
</dbReference>
<dbReference type="GO" id="GO:0000155">
    <property type="term" value="F:phosphorelay sensor kinase activity"/>
    <property type="evidence" value="ECO:0007669"/>
    <property type="project" value="UniProtKB-UniRule"/>
</dbReference>
<dbReference type="GO" id="GO:0006355">
    <property type="term" value="P:regulation of DNA-templated transcription"/>
    <property type="evidence" value="ECO:0007669"/>
    <property type="project" value="InterPro"/>
</dbReference>
<dbReference type="CDD" id="cd16922">
    <property type="entry name" value="HATPase_EvgS-ArcB-TorS-like"/>
    <property type="match status" value="1"/>
</dbReference>
<dbReference type="CDD" id="cd00082">
    <property type="entry name" value="HisKA"/>
    <property type="match status" value="1"/>
</dbReference>
<dbReference type="CDD" id="cd17546">
    <property type="entry name" value="REC_hyHK_CKI1_RcsC-like"/>
    <property type="match status" value="1"/>
</dbReference>
<dbReference type="FunFam" id="1.10.287.130:FF:000019">
    <property type="entry name" value="Sensor histidine kinase RcsC"/>
    <property type="match status" value="1"/>
</dbReference>
<dbReference type="FunFam" id="3.30.565.10:FF:000010">
    <property type="entry name" value="Sensor histidine kinase RcsC"/>
    <property type="match status" value="1"/>
</dbReference>
<dbReference type="FunFam" id="3.40.50.2300:FF:000121">
    <property type="entry name" value="Sensor histidine kinase RcsC"/>
    <property type="match status" value="1"/>
</dbReference>
<dbReference type="Gene3D" id="1.10.287.130">
    <property type="match status" value="1"/>
</dbReference>
<dbReference type="Gene3D" id="3.40.50.10970">
    <property type="match status" value="1"/>
</dbReference>
<dbReference type="Gene3D" id="3.40.50.2300">
    <property type="match status" value="1"/>
</dbReference>
<dbReference type="Gene3D" id="3.30.565.10">
    <property type="entry name" value="Histidine kinase-like ATPase, C-terminal domain"/>
    <property type="match status" value="1"/>
</dbReference>
<dbReference type="HAMAP" id="MF_00979">
    <property type="entry name" value="RcsC"/>
    <property type="match status" value="1"/>
</dbReference>
<dbReference type="InterPro" id="IPR011006">
    <property type="entry name" value="CheY-like_superfamily"/>
</dbReference>
<dbReference type="InterPro" id="IPR036890">
    <property type="entry name" value="HATPase_C_sf"/>
</dbReference>
<dbReference type="InterPro" id="IPR005467">
    <property type="entry name" value="His_kinase_dom"/>
</dbReference>
<dbReference type="InterPro" id="IPR003661">
    <property type="entry name" value="HisK_dim/P_dom"/>
</dbReference>
<dbReference type="InterPro" id="IPR036097">
    <property type="entry name" value="HisK_dim/P_sf"/>
</dbReference>
<dbReference type="InterPro" id="IPR030856">
    <property type="entry name" value="RcsC"/>
</dbReference>
<dbReference type="InterPro" id="IPR038388">
    <property type="entry name" value="RcsC_C_sf"/>
</dbReference>
<dbReference type="InterPro" id="IPR004358">
    <property type="entry name" value="Sig_transdc_His_kin-like_C"/>
</dbReference>
<dbReference type="InterPro" id="IPR019017">
    <property type="entry name" value="Sig_transdc_His_kin_a/b-loop_C"/>
</dbReference>
<dbReference type="InterPro" id="IPR001789">
    <property type="entry name" value="Sig_transdc_resp-reg_receiver"/>
</dbReference>
<dbReference type="NCBIfam" id="NF008099">
    <property type="entry name" value="PRK10841.1"/>
    <property type="match status" value="1"/>
</dbReference>
<dbReference type="PANTHER" id="PTHR45339">
    <property type="entry name" value="HYBRID SIGNAL TRANSDUCTION HISTIDINE KINASE J"/>
    <property type="match status" value="1"/>
</dbReference>
<dbReference type="PANTHER" id="PTHR45339:SF1">
    <property type="entry name" value="HYBRID SIGNAL TRANSDUCTION HISTIDINE KINASE J"/>
    <property type="match status" value="1"/>
</dbReference>
<dbReference type="Pfam" id="PF02518">
    <property type="entry name" value="HATPase_c"/>
    <property type="match status" value="1"/>
</dbReference>
<dbReference type="Pfam" id="PF00512">
    <property type="entry name" value="HisKA"/>
    <property type="match status" value="1"/>
</dbReference>
<dbReference type="Pfam" id="PF09456">
    <property type="entry name" value="RcsC"/>
    <property type="match status" value="1"/>
</dbReference>
<dbReference type="Pfam" id="PF00072">
    <property type="entry name" value="Response_reg"/>
    <property type="match status" value="1"/>
</dbReference>
<dbReference type="PRINTS" id="PR00344">
    <property type="entry name" value="BCTRLSENSOR"/>
</dbReference>
<dbReference type="SMART" id="SM00387">
    <property type="entry name" value="HATPase_c"/>
    <property type="match status" value="1"/>
</dbReference>
<dbReference type="SMART" id="SM00388">
    <property type="entry name" value="HisKA"/>
    <property type="match status" value="1"/>
</dbReference>
<dbReference type="SMART" id="SM00448">
    <property type="entry name" value="REC"/>
    <property type="match status" value="1"/>
</dbReference>
<dbReference type="SUPFAM" id="SSF55874">
    <property type="entry name" value="ATPase domain of HSP90 chaperone/DNA topoisomerase II/histidine kinase"/>
    <property type="match status" value="1"/>
</dbReference>
<dbReference type="SUPFAM" id="SSF52172">
    <property type="entry name" value="CheY-like"/>
    <property type="match status" value="2"/>
</dbReference>
<dbReference type="SUPFAM" id="SSF47384">
    <property type="entry name" value="Homodimeric domain of signal transducing histidine kinase"/>
    <property type="match status" value="1"/>
</dbReference>
<dbReference type="PROSITE" id="PS51426">
    <property type="entry name" value="ABL"/>
    <property type="match status" value="1"/>
</dbReference>
<dbReference type="PROSITE" id="PS50109">
    <property type="entry name" value="HIS_KIN"/>
    <property type="match status" value="1"/>
</dbReference>
<dbReference type="PROSITE" id="PS50110">
    <property type="entry name" value="RESPONSE_REGULATORY"/>
    <property type="match status" value="1"/>
</dbReference>
<feature type="chain" id="PRO_0000074858" description="Sensor histidine kinase RcsC">
    <location>
        <begin position="1"/>
        <end position="948"/>
    </location>
</feature>
<feature type="topological domain" description="Cytoplasmic" evidence="1">
    <location>
        <begin position="1"/>
        <end position="20"/>
    </location>
</feature>
<feature type="transmembrane region" description="Helical" evidence="2">
    <location>
        <begin position="21"/>
        <end position="41"/>
    </location>
</feature>
<feature type="topological domain" description="Periplasmic" evidence="1">
    <location>
        <begin position="42"/>
        <end position="313"/>
    </location>
</feature>
<feature type="transmembrane region" description="Helical" evidence="2">
    <location>
        <begin position="314"/>
        <end position="334"/>
    </location>
</feature>
<feature type="topological domain" description="Cytoplasmic" evidence="1">
    <location>
        <begin position="335"/>
        <end position="948"/>
    </location>
</feature>
<feature type="domain" description="PAS" evidence="2">
    <location>
        <begin position="357"/>
        <end position="425"/>
    </location>
</feature>
<feature type="domain" description="Histidine kinase" evidence="2">
    <location>
        <begin position="476"/>
        <end position="692"/>
    </location>
</feature>
<feature type="domain" description="ABL" evidence="2">
    <location>
        <begin position="705"/>
        <end position="805"/>
    </location>
</feature>
<feature type="domain" description="Response regulatory" evidence="3">
    <location>
        <begin position="826"/>
        <end position="940"/>
    </location>
</feature>
<feature type="modified residue" description="Phosphohistidine; by autocatalysis" evidence="2">
    <location>
        <position position="479"/>
    </location>
</feature>
<feature type="modified residue" description="4-aspartylphosphate" evidence="2">
    <location>
        <position position="875"/>
    </location>
</feature>
<accession>P58662</accession>
<keyword id="KW-0067">ATP-binding</keyword>
<keyword id="KW-0997">Cell inner membrane</keyword>
<keyword id="KW-1003">Cell membrane</keyword>
<keyword id="KW-0418">Kinase</keyword>
<keyword id="KW-0472">Membrane</keyword>
<keyword id="KW-0547">Nucleotide-binding</keyword>
<keyword id="KW-0597">Phosphoprotein</keyword>
<keyword id="KW-1185">Reference proteome</keyword>
<keyword id="KW-0808">Transferase</keyword>
<keyword id="KW-0812">Transmembrane</keyword>
<keyword id="KW-1133">Transmembrane helix</keyword>
<keyword id="KW-0902">Two-component regulatory system</keyword>
<evidence type="ECO:0000255" key="1"/>
<evidence type="ECO:0000255" key="2">
    <source>
        <dbReference type="HAMAP-Rule" id="MF_00979"/>
    </source>
</evidence>
<evidence type="ECO:0000255" key="3">
    <source>
        <dbReference type="PROSITE-ProRule" id="PRU00169"/>
    </source>
</evidence>
<gene>
    <name evidence="2" type="primary">rcsC</name>
    <name type="ordered locus">STM2271</name>
</gene>
<organism>
    <name type="scientific">Salmonella typhimurium (strain LT2 / SGSC1412 / ATCC 700720)</name>
    <dbReference type="NCBI Taxonomy" id="99287"/>
    <lineage>
        <taxon>Bacteria</taxon>
        <taxon>Pseudomonadati</taxon>
        <taxon>Pseudomonadota</taxon>
        <taxon>Gammaproteobacteria</taxon>
        <taxon>Enterobacterales</taxon>
        <taxon>Enterobacteriaceae</taxon>
        <taxon>Salmonella</taxon>
    </lineage>
</organism>
<name>RCSC_SALTY</name>
<reference key="1">
    <citation type="journal article" date="2001" name="Nature">
        <title>Complete genome sequence of Salmonella enterica serovar Typhimurium LT2.</title>
        <authorList>
            <person name="McClelland M."/>
            <person name="Sanderson K.E."/>
            <person name="Spieth J."/>
            <person name="Clifton S.W."/>
            <person name="Latreille P."/>
            <person name="Courtney L."/>
            <person name="Porwollik S."/>
            <person name="Ali J."/>
            <person name="Dante M."/>
            <person name="Du F."/>
            <person name="Hou S."/>
            <person name="Layman D."/>
            <person name="Leonard S."/>
            <person name="Nguyen C."/>
            <person name="Scott K."/>
            <person name="Holmes A."/>
            <person name="Grewal N."/>
            <person name="Mulvaney E."/>
            <person name="Ryan E."/>
            <person name="Sun H."/>
            <person name="Florea L."/>
            <person name="Miller W."/>
            <person name="Stoneking T."/>
            <person name="Nhan M."/>
            <person name="Waterston R."/>
            <person name="Wilson R.K."/>
        </authorList>
    </citation>
    <scope>NUCLEOTIDE SEQUENCE [LARGE SCALE GENOMIC DNA]</scope>
    <source>
        <strain>LT2 / SGSC1412 / ATCC 700720</strain>
    </source>
</reference>
<sequence length="948" mass="106279">MKYLASFRTTLKVSRYLFRALALLIWLLIAFVSVFYIVNALHQRESEIRQEFNLSSDQAQRFIQRTSDVMKELKYIAENRLTAENGVMSSRARDDKMVVPDFEPLFADSDCAAMGSAWRGSLESLAWFMRYWRDNFSAAYDLNRVFLIGSDNLCMANFGLREMPVERDDALKALHERIMKYRNAPQEESGNNLFWISQGARQGVGYFYALTPVYLANRLQALLGVEQSIRMENFFTPGSLPMGVTIIDENGHSLISLTGPDGIIKAEPRWMQERSWFGYTPGFRELVLKKSLPPSSLSIVYSVPVDLVLERIRILILNAILLNVLVGAGLFTLARMYERRIFIPAESDAQRLEEHEQFNRKIVASAPVGICILRTIDGVNILSNELAHTYLNMLTHEDRQRLTQIICGQQVNFVDVLTSNNTNLQISFVHSRYRNENVAICVLVDVSTRVKMEESLQEMAQAAEQASQSKSMFLATVSHELRTPLYGIIGNLDLLQTKELPKGVERLVTAMNNSSSLLLKIISDILDFSKIESEQLKIEPREFSPREVMNHITANYLPLVVRKQLGLYCFIEPDVPVSLNGDPMRLQQVISNLLSNAIKFTDIGCIVLHVRCDGDYLSIRVRDTGVGIPAKEVVRLFDPFFQVGTGVQRNFQGTGLGLAICEKLISMMDGDISVDSEPGMGSQFTLRIPLYGAQYPVKKSVEGLAGTCCWLAVRNTSLCQFIETSLARSGVHTQRYEGQEPAADDILIVDDALEHTWQGRAAVVFCRRHIGIPLERAPGEWVHSVASVHELPALLARIYSIELDSEALSSALPTTDKTADSNDDMMILVVDDHPINRRLLADQLGSLGYQCKTANDGVDALNVLSKNAIDIVLSDVNMPNMDGYRLTQRIRQLGLTLPVVGVTANALAEEKQRCLESGMDSCLSKPVTLDVLKQTLAVYAERVRKTRA</sequence>